<gene>
    <name type="ordered locus">Rv2850c</name>
    <name type="ORF">MTCY24A1.07</name>
</gene>
<organism>
    <name type="scientific">Mycobacterium tuberculosis (strain ATCC 25618 / H37Rv)</name>
    <dbReference type="NCBI Taxonomy" id="83332"/>
    <lineage>
        <taxon>Bacteria</taxon>
        <taxon>Bacillati</taxon>
        <taxon>Actinomycetota</taxon>
        <taxon>Actinomycetes</taxon>
        <taxon>Mycobacteriales</taxon>
        <taxon>Mycobacteriaceae</taxon>
        <taxon>Mycobacterium</taxon>
        <taxon>Mycobacterium tuberculosis complex</taxon>
    </lineage>
</organism>
<reference key="1">
    <citation type="journal article" date="1998" name="Nature">
        <title>Deciphering the biology of Mycobacterium tuberculosis from the complete genome sequence.</title>
        <authorList>
            <person name="Cole S.T."/>
            <person name="Brosch R."/>
            <person name="Parkhill J."/>
            <person name="Garnier T."/>
            <person name="Churcher C.M."/>
            <person name="Harris D.E."/>
            <person name="Gordon S.V."/>
            <person name="Eiglmeier K."/>
            <person name="Gas S."/>
            <person name="Barry C.E. III"/>
            <person name="Tekaia F."/>
            <person name="Badcock K."/>
            <person name="Basham D."/>
            <person name="Brown D."/>
            <person name="Chillingworth T."/>
            <person name="Connor R."/>
            <person name="Davies R.M."/>
            <person name="Devlin K."/>
            <person name="Feltwell T."/>
            <person name="Gentles S."/>
            <person name="Hamlin N."/>
            <person name="Holroyd S."/>
            <person name="Hornsby T."/>
            <person name="Jagels K."/>
            <person name="Krogh A."/>
            <person name="McLean J."/>
            <person name="Moule S."/>
            <person name="Murphy L.D."/>
            <person name="Oliver S."/>
            <person name="Osborne J."/>
            <person name="Quail M.A."/>
            <person name="Rajandream M.A."/>
            <person name="Rogers J."/>
            <person name="Rutter S."/>
            <person name="Seeger K."/>
            <person name="Skelton S."/>
            <person name="Squares S."/>
            <person name="Squares R."/>
            <person name="Sulston J.E."/>
            <person name="Taylor K."/>
            <person name="Whitehead S."/>
            <person name="Barrell B.G."/>
        </authorList>
    </citation>
    <scope>NUCLEOTIDE SEQUENCE [LARGE SCALE GENOMIC DNA]</scope>
    <source>
        <strain>ATCC 25618 / H37Rv</strain>
    </source>
</reference>
<reference key="2">
    <citation type="journal article" date="2011" name="Mol. Cell. Proteomics">
        <title>Proteogenomic analysis of Mycobacterium tuberculosis by high resolution mass spectrometry.</title>
        <authorList>
            <person name="Kelkar D.S."/>
            <person name="Kumar D."/>
            <person name="Kumar P."/>
            <person name="Balakrishnan L."/>
            <person name="Muthusamy B."/>
            <person name="Yadav A.K."/>
            <person name="Shrivastava P."/>
            <person name="Marimuthu A."/>
            <person name="Anand S."/>
            <person name="Sundaram H."/>
            <person name="Kingsbury R."/>
            <person name="Harsha H.C."/>
            <person name="Nair B."/>
            <person name="Prasad T.S."/>
            <person name="Chauhan D.S."/>
            <person name="Katoch K."/>
            <person name="Katoch V.M."/>
            <person name="Kumar P."/>
            <person name="Chaerkady R."/>
            <person name="Ramachandran S."/>
            <person name="Dash D."/>
            <person name="Pandey A."/>
        </authorList>
    </citation>
    <scope>ACETYLATION [LARGE SCALE ANALYSIS] AT MET-1</scope>
    <scope>IDENTIFICATION BY MASS SPECTROMETRY [LARGE SCALE ANALYSIS]</scope>
    <source>
        <strain>ATCC 25618 / H37Rv</strain>
    </source>
</reference>
<protein>
    <recommendedName>
        <fullName>Uncharacterized protein Rv2850c</fullName>
    </recommendedName>
</protein>
<evidence type="ECO:0000255" key="1">
    <source>
        <dbReference type="PROSITE-ProRule" id="PRU00219"/>
    </source>
</evidence>
<evidence type="ECO:0000256" key="2">
    <source>
        <dbReference type="SAM" id="MobiDB-lite"/>
    </source>
</evidence>
<evidence type="ECO:0000305" key="3"/>
<evidence type="ECO:0007744" key="4">
    <source>
    </source>
</evidence>
<feature type="chain" id="PRO_0000206874" description="Uncharacterized protein Rv2850c">
    <location>
        <begin position="1"/>
        <end position="629"/>
    </location>
</feature>
<feature type="domain" description="VWFA" evidence="1">
    <location>
        <begin position="451"/>
        <end position="587"/>
    </location>
</feature>
<feature type="region of interest" description="Disordered" evidence="2">
    <location>
        <begin position="308"/>
        <end position="395"/>
    </location>
</feature>
<feature type="compositionally biased region" description="Polar residues" evidence="2">
    <location>
        <begin position="322"/>
        <end position="334"/>
    </location>
</feature>
<feature type="modified residue" description="N-acetylmethionine" evidence="4">
    <location>
        <position position="1"/>
    </location>
</feature>
<keyword id="KW-0007">Acetylation</keyword>
<keyword id="KW-1185">Reference proteome</keyword>
<sequence>MKPYPFSAIVGHDRLRLALLLCAVRPEIGGALIRGEKGTAKSTAVRGLAALLSVATGSTETGLVELPLGATEDRVVGSLDLQRVMRDGEHAFSPGLLARAHGGVLYVDEVNLLHDHLVDILLDAAAMGRVHVERDGISHSHEARFVLIGTMNPEEGELRPQLLDRFGLTVDVQASRDIDVRVQVIRRRMAYEADPDAFVARYADADAELAHRIAAARATVDDVVLGDNELRRIAALCAAFDVDGMRADLVVARTAAAHAAWRGVRTVEEQDIRAAAELALPHRRRRDPFDDHGIDRDQLDEALALASVDPEPEPDPPGGGQSANEPASQPNSRSKSTEPGAPSSMGDDPPRPASPRLRSSPRPSAPPSKIFRTRALRVPGVGTGAPGRRSRARNASGSVVAAAEVSDPDAHGLHLFATLLAAGERAFGAGPLRPWPDDVRRAIREGREGNLVIFVVDASGSMAARDRMAAVSGATLSLLRDAYQRRDKVAVITFRQHEATLLLSPTSSAHIAGRRLARFSTGGKTPLAEGLLAARALIIREKVRDRARRPLVVVLTDGRATAGPDPLGRSRTAAAGLVAEGAAAVVVDCETSYVRLGLAAQLARQLGAPVVRLEQLHADYLVHAVRGVA</sequence>
<comment type="similarity">
    <text evidence="3">Belongs to the Mg-chelatase subunits D/I family.</text>
</comment>
<accession>P9WPR3</accession>
<accession>L0TB22</accession>
<accession>O05809</accession>
<name>Y2850_MYCTU</name>
<dbReference type="EMBL" id="AL123456">
    <property type="protein sequence ID" value="CCP45651.1"/>
    <property type="molecule type" value="Genomic_DNA"/>
</dbReference>
<dbReference type="PIR" id="E70589">
    <property type="entry name" value="E70589"/>
</dbReference>
<dbReference type="RefSeq" id="NP_217366.1">
    <property type="nucleotide sequence ID" value="NC_000962.3"/>
</dbReference>
<dbReference type="RefSeq" id="WP_003901481.1">
    <property type="nucleotide sequence ID" value="NZ_NVQJ01000006.1"/>
</dbReference>
<dbReference type="SMR" id="P9WPR3"/>
<dbReference type="FunCoup" id="P9WPR3">
    <property type="interactions" value="82"/>
</dbReference>
<dbReference type="STRING" id="83332.Rv2850c"/>
<dbReference type="iPTMnet" id="P9WPR3"/>
<dbReference type="PaxDb" id="83332-Rv2850c"/>
<dbReference type="DNASU" id="887364"/>
<dbReference type="GeneID" id="887364"/>
<dbReference type="KEGG" id="mtu:Rv2850c"/>
<dbReference type="KEGG" id="mtv:RVBD_2850c"/>
<dbReference type="TubercuList" id="Rv2850c"/>
<dbReference type="eggNOG" id="COG1239">
    <property type="taxonomic scope" value="Bacteria"/>
</dbReference>
<dbReference type="eggNOG" id="COG1240">
    <property type="taxonomic scope" value="Bacteria"/>
</dbReference>
<dbReference type="InParanoid" id="P9WPR3"/>
<dbReference type="OrthoDB" id="9775079at2"/>
<dbReference type="PhylomeDB" id="P9WPR3"/>
<dbReference type="Proteomes" id="UP000001584">
    <property type="component" value="Chromosome"/>
</dbReference>
<dbReference type="GO" id="GO:0005524">
    <property type="term" value="F:ATP binding"/>
    <property type="evidence" value="ECO:0007669"/>
    <property type="project" value="InterPro"/>
</dbReference>
<dbReference type="GO" id="GO:0016887">
    <property type="term" value="F:ATP hydrolysis activity"/>
    <property type="evidence" value="ECO:0007669"/>
    <property type="project" value="InterPro"/>
</dbReference>
<dbReference type="CDD" id="cd00009">
    <property type="entry name" value="AAA"/>
    <property type="match status" value="1"/>
</dbReference>
<dbReference type="CDD" id="cd01451">
    <property type="entry name" value="vWA_Magnesium_chelatase"/>
    <property type="match status" value="1"/>
</dbReference>
<dbReference type="Gene3D" id="1.10.8.80">
    <property type="entry name" value="Magnesium chelatase subunit I, C-Terminal domain"/>
    <property type="match status" value="1"/>
</dbReference>
<dbReference type="Gene3D" id="3.40.50.300">
    <property type="entry name" value="P-loop containing nucleotide triphosphate hydrolases"/>
    <property type="match status" value="1"/>
</dbReference>
<dbReference type="Gene3D" id="3.40.50.410">
    <property type="entry name" value="von Willebrand factor, type A domain"/>
    <property type="match status" value="1"/>
</dbReference>
<dbReference type="InterPro" id="IPR003593">
    <property type="entry name" value="AAA+_ATPase"/>
</dbReference>
<dbReference type="InterPro" id="IPR011704">
    <property type="entry name" value="ATPase_dyneun-rel_AAA"/>
</dbReference>
<dbReference type="InterPro" id="IPR041702">
    <property type="entry name" value="BchD/ChlD_VWA"/>
</dbReference>
<dbReference type="InterPro" id="IPR041628">
    <property type="entry name" value="ChlI/MoxR_AAA_lid"/>
</dbReference>
<dbReference type="InterPro" id="IPR052989">
    <property type="entry name" value="Mg-chelatase_DI-like"/>
</dbReference>
<dbReference type="InterPro" id="IPR027417">
    <property type="entry name" value="P-loop_NTPase"/>
</dbReference>
<dbReference type="InterPro" id="IPR002035">
    <property type="entry name" value="VWF_A"/>
</dbReference>
<dbReference type="InterPro" id="IPR036465">
    <property type="entry name" value="vWFA_dom_sf"/>
</dbReference>
<dbReference type="PANTHER" id="PTHR35023">
    <property type="entry name" value="CHELATASE-RELATED"/>
    <property type="match status" value="1"/>
</dbReference>
<dbReference type="PANTHER" id="PTHR35023:SF1">
    <property type="entry name" value="MG-PROTOPORPHYRIN IX CHELATASE"/>
    <property type="match status" value="1"/>
</dbReference>
<dbReference type="Pfam" id="PF07728">
    <property type="entry name" value="AAA_5"/>
    <property type="match status" value="1"/>
</dbReference>
<dbReference type="Pfam" id="PF17863">
    <property type="entry name" value="AAA_lid_2"/>
    <property type="match status" value="1"/>
</dbReference>
<dbReference type="Pfam" id="PF13519">
    <property type="entry name" value="VWA_2"/>
    <property type="match status" value="1"/>
</dbReference>
<dbReference type="SMART" id="SM00382">
    <property type="entry name" value="AAA"/>
    <property type="match status" value="1"/>
</dbReference>
<dbReference type="SMART" id="SM00327">
    <property type="entry name" value="VWA"/>
    <property type="match status" value="1"/>
</dbReference>
<dbReference type="SUPFAM" id="SSF52540">
    <property type="entry name" value="P-loop containing nucleoside triphosphate hydrolases"/>
    <property type="match status" value="1"/>
</dbReference>
<dbReference type="SUPFAM" id="SSF53300">
    <property type="entry name" value="vWA-like"/>
    <property type="match status" value="1"/>
</dbReference>
<dbReference type="PROSITE" id="PS50234">
    <property type="entry name" value="VWFA"/>
    <property type="match status" value="1"/>
</dbReference>
<proteinExistence type="evidence at protein level"/>